<organism>
    <name type="scientific">Pseudomonas fluorescens (strain ATCC BAA-477 / NRRL B-23932 / Pf-5)</name>
    <dbReference type="NCBI Taxonomy" id="220664"/>
    <lineage>
        <taxon>Bacteria</taxon>
        <taxon>Pseudomonadati</taxon>
        <taxon>Pseudomonadota</taxon>
        <taxon>Gammaproteobacteria</taxon>
        <taxon>Pseudomonadales</taxon>
        <taxon>Pseudomonadaceae</taxon>
        <taxon>Pseudomonas</taxon>
    </lineage>
</organism>
<accession>Q4KJ82</accession>
<name>RSGA_PSEF5</name>
<comment type="function">
    <text evidence="1">One of several proteins that assist in the late maturation steps of the functional core of the 30S ribosomal subunit. Helps release RbfA from mature subunits. May play a role in the assembly of ribosomal proteins into the subunit. Circularly permuted GTPase that catalyzes slow GTP hydrolysis, GTPase activity is stimulated by the 30S ribosomal subunit.</text>
</comment>
<comment type="cofactor">
    <cofactor evidence="1">
        <name>Zn(2+)</name>
        <dbReference type="ChEBI" id="CHEBI:29105"/>
    </cofactor>
    <text evidence="1">Binds 1 zinc ion per subunit.</text>
</comment>
<comment type="subunit">
    <text evidence="1">Monomer. Associates with 30S ribosomal subunit, binds 16S rRNA.</text>
</comment>
<comment type="subcellular location">
    <subcellularLocation>
        <location evidence="1">Cytoplasm</location>
    </subcellularLocation>
</comment>
<comment type="similarity">
    <text evidence="1">Belongs to the TRAFAC class YlqF/YawG GTPase family. RsgA subfamily.</text>
</comment>
<feature type="chain" id="PRO_1000188124" description="Small ribosomal subunit biogenesis GTPase RsgA">
    <location>
        <begin position="1"/>
        <end position="343"/>
    </location>
</feature>
<feature type="domain" description="CP-type G" evidence="2">
    <location>
        <begin position="116"/>
        <end position="275"/>
    </location>
</feature>
<feature type="binding site" evidence="1">
    <location>
        <begin position="163"/>
        <end position="166"/>
    </location>
    <ligand>
        <name>GTP</name>
        <dbReference type="ChEBI" id="CHEBI:37565"/>
    </ligand>
</feature>
<feature type="binding site" evidence="1">
    <location>
        <begin position="217"/>
        <end position="225"/>
    </location>
    <ligand>
        <name>GTP</name>
        <dbReference type="ChEBI" id="CHEBI:37565"/>
    </ligand>
</feature>
<feature type="binding site" evidence="1">
    <location>
        <position position="299"/>
    </location>
    <ligand>
        <name>Zn(2+)</name>
        <dbReference type="ChEBI" id="CHEBI:29105"/>
    </ligand>
</feature>
<feature type="binding site" evidence="1">
    <location>
        <position position="304"/>
    </location>
    <ligand>
        <name>Zn(2+)</name>
        <dbReference type="ChEBI" id="CHEBI:29105"/>
    </ligand>
</feature>
<feature type="binding site" evidence="1">
    <location>
        <position position="306"/>
    </location>
    <ligand>
        <name>Zn(2+)</name>
        <dbReference type="ChEBI" id="CHEBI:29105"/>
    </ligand>
</feature>
<feature type="binding site" evidence="1">
    <location>
        <position position="312"/>
    </location>
    <ligand>
        <name>Zn(2+)</name>
        <dbReference type="ChEBI" id="CHEBI:29105"/>
    </ligand>
</feature>
<gene>
    <name evidence="1" type="primary">rsgA</name>
    <name type="ordered locus">PFL_0557</name>
</gene>
<dbReference type="EC" id="3.6.1.-" evidence="1"/>
<dbReference type="EMBL" id="CP000076">
    <property type="protein sequence ID" value="AAY95966.1"/>
    <property type="molecule type" value="Genomic_DNA"/>
</dbReference>
<dbReference type="RefSeq" id="WP_011058930.1">
    <property type="nucleotide sequence ID" value="NC_004129.6"/>
</dbReference>
<dbReference type="SMR" id="Q4KJ82"/>
<dbReference type="STRING" id="220664.PFL_0557"/>
<dbReference type="GeneID" id="57473547"/>
<dbReference type="KEGG" id="pfl:PFL_0557"/>
<dbReference type="PATRIC" id="fig|220664.5.peg.574"/>
<dbReference type="eggNOG" id="COG1162">
    <property type="taxonomic scope" value="Bacteria"/>
</dbReference>
<dbReference type="HOGENOM" id="CLU_033617_2_0_6"/>
<dbReference type="Proteomes" id="UP000008540">
    <property type="component" value="Chromosome"/>
</dbReference>
<dbReference type="GO" id="GO:0005737">
    <property type="term" value="C:cytoplasm"/>
    <property type="evidence" value="ECO:0007669"/>
    <property type="project" value="UniProtKB-SubCell"/>
</dbReference>
<dbReference type="GO" id="GO:0005525">
    <property type="term" value="F:GTP binding"/>
    <property type="evidence" value="ECO:0007669"/>
    <property type="project" value="UniProtKB-UniRule"/>
</dbReference>
<dbReference type="GO" id="GO:0003924">
    <property type="term" value="F:GTPase activity"/>
    <property type="evidence" value="ECO:0007669"/>
    <property type="project" value="UniProtKB-UniRule"/>
</dbReference>
<dbReference type="GO" id="GO:0046872">
    <property type="term" value="F:metal ion binding"/>
    <property type="evidence" value="ECO:0007669"/>
    <property type="project" value="UniProtKB-KW"/>
</dbReference>
<dbReference type="GO" id="GO:0019843">
    <property type="term" value="F:rRNA binding"/>
    <property type="evidence" value="ECO:0007669"/>
    <property type="project" value="UniProtKB-KW"/>
</dbReference>
<dbReference type="GO" id="GO:0042274">
    <property type="term" value="P:ribosomal small subunit biogenesis"/>
    <property type="evidence" value="ECO:0007669"/>
    <property type="project" value="UniProtKB-UniRule"/>
</dbReference>
<dbReference type="CDD" id="cd01854">
    <property type="entry name" value="YjeQ_EngC"/>
    <property type="match status" value="1"/>
</dbReference>
<dbReference type="Gene3D" id="2.40.50.140">
    <property type="entry name" value="Nucleic acid-binding proteins"/>
    <property type="match status" value="1"/>
</dbReference>
<dbReference type="Gene3D" id="3.40.50.300">
    <property type="entry name" value="P-loop containing nucleotide triphosphate hydrolases"/>
    <property type="match status" value="1"/>
</dbReference>
<dbReference type="Gene3D" id="1.10.40.50">
    <property type="entry name" value="Probable gtpase engc, domain 3"/>
    <property type="match status" value="1"/>
</dbReference>
<dbReference type="HAMAP" id="MF_01820">
    <property type="entry name" value="GTPase_RsgA"/>
    <property type="match status" value="1"/>
</dbReference>
<dbReference type="InterPro" id="IPR030378">
    <property type="entry name" value="G_CP_dom"/>
</dbReference>
<dbReference type="InterPro" id="IPR012340">
    <property type="entry name" value="NA-bd_OB-fold"/>
</dbReference>
<dbReference type="InterPro" id="IPR027417">
    <property type="entry name" value="P-loop_NTPase"/>
</dbReference>
<dbReference type="InterPro" id="IPR004881">
    <property type="entry name" value="Ribosome_biogen_GTPase_RsgA"/>
</dbReference>
<dbReference type="InterPro" id="IPR010914">
    <property type="entry name" value="RsgA_GTPase_dom"/>
</dbReference>
<dbReference type="NCBIfam" id="NF008931">
    <property type="entry name" value="PRK12288.1"/>
    <property type="match status" value="1"/>
</dbReference>
<dbReference type="NCBIfam" id="TIGR00157">
    <property type="entry name" value="ribosome small subunit-dependent GTPase A"/>
    <property type="match status" value="1"/>
</dbReference>
<dbReference type="PANTHER" id="PTHR32120">
    <property type="entry name" value="SMALL RIBOSOMAL SUBUNIT BIOGENESIS GTPASE RSGA"/>
    <property type="match status" value="1"/>
</dbReference>
<dbReference type="PANTHER" id="PTHR32120:SF11">
    <property type="entry name" value="SMALL RIBOSOMAL SUBUNIT BIOGENESIS GTPASE RSGA 1, MITOCHONDRIAL-RELATED"/>
    <property type="match status" value="1"/>
</dbReference>
<dbReference type="Pfam" id="PF03193">
    <property type="entry name" value="RsgA_GTPase"/>
    <property type="match status" value="1"/>
</dbReference>
<dbReference type="SUPFAM" id="SSF52540">
    <property type="entry name" value="P-loop containing nucleoside triphosphate hydrolases"/>
    <property type="match status" value="1"/>
</dbReference>
<dbReference type="PROSITE" id="PS50936">
    <property type="entry name" value="ENGC_GTPASE"/>
    <property type="match status" value="1"/>
</dbReference>
<dbReference type="PROSITE" id="PS51721">
    <property type="entry name" value="G_CP"/>
    <property type="match status" value="1"/>
</dbReference>
<protein>
    <recommendedName>
        <fullName evidence="1">Small ribosomal subunit biogenesis GTPase RsgA</fullName>
        <ecNumber evidence="1">3.6.1.-</ecNumber>
    </recommendedName>
</protein>
<reference key="1">
    <citation type="journal article" date="2005" name="Nat. Biotechnol.">
        <title>Complete genome sequence of the plant commensal Pseudomonas fluorescens Pf-5.</title>
        <authorList>
            <person name="Paulsen I.T."/>
            <person name="Press C.M."/>
            <person name="Ravel J."/>
            <person name="Kobayashi D.Y."/>
            <person name="Myers G.S.A."/>
            <person name="Mavrodi D.V."/>
            <person name="DeBoy R.T."/>
            <person name="Seshadri R."/>
            <person name="Ren Q."/>
            <person name="Madupu R."/>
            <person name="Dodson R.J."/>
            <person name="Durkin A.S."/>
            <person name="Brinkac L.M."/>
            <person name="Daugherty S.C."/>
            <person name="Sullivan S.A."/>
            <person name="Rosovitz M.J."/>
            <person name="Gwinn M.L."/>
            <person name="Zhou L."/>
            <person name="Schneider D.J."/>
            <person name="Cartinhour S.W."/>
            <person name="Nelson W.C."/>
            <person name="Weidman J."/>
            <person name="Watkins K."/>
            <person name="Tran K."/>
            <person name="Khouri H."/>
            <person name="Pierson E.A."/>
            <person name="Pierson L.S. III"/>
            <person name="Thomashow L.S."/>
            <person name="Loper J.E."/>
        </authorList>
    </citation>
    <scope>NUCLEOTIDE SEQUENCE [LARGE SCALE GENOMIC DNA]</scope>
    <source>
        <strain>ATCC BAA-477 / NRRL B-23932 / Pf-5</strain>
    </source>
</reference>
<evidence type="ECO:0000255" key="1">
    <source>
        <dbReference type="HAMAP-Rule" id="MF_01820"/>
    </source>
</evidence>
<evidence type="ECO:0000255" key="2">
    <source>
        <dbReference type="PROSITE-ProRule" id="PRU01058"/>
    </source>
</evidence>
<sequence length="343" mass="37382">MAKRQLNRRQNWRIEKIQGERAARAAKRESSAVEALEGGDLGPEQTGLVIAHFGVQVEVEAREGETAGQVFRCYLRANLPALVTGDQVVWRAGNQGIGVIVAQLPRSTELCRPDSRGQLKPVAANVDMIVIVFAPMPEPHANLIDRYLVAAEHAGIRPLLLLNKADLIDEQNAPALNALLAVYRQLGYPLLEVSAHHGDGMEQLQALLDGRISVFVGQSGVGKSSLVNSLLPEVETRVGPLSEFSGQGTHTTTTARLFHFPGGGELIDSPGIREFGLGHVSRADVEAGFIEFNDLLGTCRFRDCKHDREPGCALLKALEDGRIQQQRMNSYRSILASLPDNSY</sequence>
<proteinExistence type="inferred from homology"/>
<keyword id="KW-0963">Cytoplasm</keyword>
<keyword id="KW-0342">GTP-binding</keyword>
<keyword id="KW-0378">Hydrolase</keyword>
<keyword id="KW-0479">Metal-binding</keyword>
<keyword id="KW-0547">Nucleotide-binding</keyword>
<keyword id="KW-0690">Ribosome biogenesis</keyword>
<keyword id="KW-0694">RNA-binding</keyword>
<keyword id="KW-0699">rRNA-binding</keyword>
<keyword id="KW-0862">Zinc</keyword>